<sequence length="260" mass="27622">MSAIHPTAIVEDGAILGENVSVGPFAYIGAKVSIDDGTSVASHAVIEGRTSIGKNNRIFSHSAIGTIPQDLKYAGEDVELIIGDNNNIREFTLLNPGTKGGGSVTKIGNGNLLMGYVHLGHDVILGDNCILANGATLAGHVELGNNVVIGGLTPVHQFVHVGDFAMIGGASALAQDIPPYCLAEGNRATLRGLNLTGLRRHIPREEINALKSAYRELFEEGKALQDVAQRLFEESSSEKVKNLCKFIKTSKRGIPFTRKS</sequence>
<protein>
    <recommendedName>
        <fullName evidence="1">Acyl-[acyl-carrier-protein]--UDP-N-acetylglucosamine O-acyltransferase</fullName>
        <shortName evidence="1">UDP-N-acetylglucosamine acyltransferase</shortName>
        <ecNumber evidence="1">2.3.1.129</ecNumber>
    </recommendedName>
</protein>
<proteinExistence type="inferred from homology"/>
<keyword id="KW-0012">Acyltransferase</keyword>
<keyword id="KW-0963">Cytoplasm</keyword>
<keyword id="KW-0441">Lipid A biosynthesis</keyword>
<keyword id="KW-0444">Lipid biosynthesis</keyword>
<keyword id="KW-0443">Lipid metabolism</keyword>
<keyword id="KW-0677">Repeat</keyword>
<keyword id="KW-0808">Transferase</keyword>
<accession>A6Q9A7</accession>
<organism>
    <name type="scientific">Sulfurovum sp. (strain NBC37-1)</name>
    <dbReference type="NCBI Taxonomy" id="387093"/>
    <lineage>
        <taxon>Bacteria</taxon>
        <taxon>Pseudomonadati</taxon>
        <taxon>Campylobacterota</taxon>
        <taxon>Epsilonproteobacteria</taxon>
        <taxon>Campylobacterales</taxon>
        <taxon>Sulfurovaceae</taxon>
        <taxon>Sulfurovum</taxon>
    </lineage>
</organism>
<evidence type="ECO:0000255" key="1">
    <source>
        <dbReference type="HAMAP-Rule" id="MF_00387"/>
    </source>
</evidence>
<name>LPXA_SULNB</name>
<gene>
    <name evidence="1" type="primary">lpxA</name>
    <name type="ordered locus">SUN_1111</name>
</gene>
<reference key="1">
    <citation type="journal article" date="2007" name="Proc. Natl. Acad. Sci. U.S.A.">
        <title>Deep-sea vent epsilon-proteobacterial genomes provide insights into emergence of pathogens.</title>
        <authorList>
            <person name="Nakagawa S."/>
            <person name="Takaki Y."/>
            <person name="Shimamura S."/>
            <person name="Reysenbach A.-L."/>
            <person name="Takai K."/>
            <person name="Horikoshi K."/>
        </authorList>
    </citation>
    <scope>NUCLEOTIDE SEQUENCE [LARGE SCALE GENOMIC DNA]</scope>
    <source>
        <strain>NBC37-1</strain>
    </source>
</reference>
<comment type="function">
    <text evidence="1">Involved in the biosynthesis of lipid A, a phosphorylated glycolipid that anchors the lipopolysaccharide to the outer membrane of the cell.</text>
</comment>
<comment type="catalytic activity">
    <reaction evidence="1">
        <text>a (3R)-hydroxyacyl-[ACP] + UDP-N-acetyl-alpha-D-glucosamine = a UDP-3-O-[(3R)-3-hydroxyacyl]-N-acetyl-alpha-D-glucosamine + holo-[ACP]</text>
        <dbReference type="Rhea" id="RHEA:67812"/>
        <dbReference type="Rhea" id="RHEA-COMP:9685"/>
        <dbReference type="Rhea" id="RHEA-COMP:9945"/>
        <dbReference type="ChEBI" id="CHEBI:57705"/>
        <dbReference type="ChEBI" id="CHEBI:64479"/>
        <dbReference type="ChEBI" id="CHEBI:78827"/>
        <dbReference type="ChEBI" id="CHEBI:173225"/>
        <dbReference type="EC" id="2.3.1.129"/>
    </reaction>
</comment>
<comment type="pathway">
    <text evidence="1">Glycolipid biosynthesis; lipid IV(A) biosynthesis; lipid IV(A) from (3R)-3-hydroxytetradecanoyl-[acyl-carrier-protein] and UDP-N-acetyl-alpha-D-glucosamine: step 1/6.</text>
</comment>
<comment type="subunit">
    <text evidence="1">Homotrimer.</text>
</comment>
<comment type="subcellular location">
    <subcellularLocation>
        <location evidence="1">Cytoplasm</location>
    </subcellularLocation>
</comment>
<comment type="similarity">
    <text evidence="1">Belongs to the transferase hexapeptide repeat family. LpxA subfamily.</text>
</comment>
<feature type="chain" id="PRO_1000013180" description="Acyl-[acyl-carrier-protein]--UDP-N-acetylglucosamine O-acyltransferase">
    <location>
        <begin position="1"/>
        <end position="260"/>
    </location>
</feature>
<dbReference type="EC" id="2.3.1.129" evidence="1"/>
<dbReference type="EMBL" id="AP009179">
    <property type="protein sequence ID" value="BAF72066.1"/>
    <property type="molecule type" value="Genomic_DNA"/>
</dbReference>
<dbReference type="RefSeq" id="WP_011980799.1">
    <property type="nucleotide sequence ID" value="NC_009663.1"/>
</dbReference>
<dbReference type="SMR" id="A6Q9A7"/>
<dbReference type="STRING" id="387093.SUN_1111"/>
<dbReference type="KEGG" id="sun:SUN_1111"/>
<dbReference type="eggNOG" id="COG1043">
    <property type="taxonomic scope" value="Bacteria"/>
</dbReference>
<dbReference type="HOGENOM" id="CLU_061249_0_0_7"/>
<dbReference type="OrthoDB" id="9807278at2"/>
<dbReference type="UniPathway" id="UPA00359">
    <property type="reaction ID" value="UER00477"/>
</dbReference>
<dbReference type="Proteomes" id="UP000006378">
    <property type="component" value="Chromosome"/>
</dbReference>
<dbReference type="GO" id="GO:0005737">
    <property type="term" value="C:cytoplasm"/>
    <property type="evidence" value="ECO:0007669"/>
    <property type="project" value="UniProtKB-SubCell"/>
</dbReference>
<dbReference type="GO" id="GO:0016020">
    <property type="term" value="C:membrane"/>
    <property type="evidence" value="ECO:0007669"/>
    <property type="project" value="GOC"/>
</dbReference>
<dbReference type="GO" id="GO:0008780">
    <property type="term" value="F:acyl-[acyl-carrier-protein]-UDP-N-acetylglucosamine O-acyltransferase activity"/>
    <property type="evidence" value="ECO:0007669"/>
    <property type="project" value="UniProtKB-UniRule"/>
</dbReference>
<dbReference type="GO" id="GO:0009245">
    <property type="term" value="P:lipid A biosynthetic process"/>
    <property type="evidence" value="ECO:0007669"/>
    <property type="project" value="UniProtKB-UniRule"/>
</dbReference>
<dbReference type="CDD" id="cd03351">
    <property type="entry name" value="LbH_UDP-GlcNAc_AT"/>
    <property type="match status" value="1"/>
</dbReference>
<dbReference type="Gene3D" id="2.160.10.10">
    <property type="entry name" value="Hexapeptide repeat proteins"/>
    <property type="match status" value="1"/>
</dbReference>
<dbReference type="Gene3D" id="1.20.1180.10">
    <property type="entry name" value="Udp N-acetylglucosamine O-acyltransferase, C-terminal domain"/>
    <property type="match status" value="1"/>
</dbReference>
<dbReference type="HAMAP" id="MF_00387">
    <property type="entry name" value="LpxA"/>
    <property type="match status" value="1"/>
</dbReference>
<dbReference type="InterPro" id="IPR029098">
    <property type="entry name" value="Acetyltransf_C"/>
</dbReference>
<dbReference type="InterPro" id="IPR037157">
    <property type="entry name" value="Acetyltransf_C_sf"/>
</dbReference>
<dbReference type="InterPro" id="IPR001451">
    <property type="entry name" value="Hexapep"/>
</dbReference>
<dbReference type="InterPro" id="IPR018357">
    <property type="entry name" value="Hexapep_transf_CS"/>
</dbReference>
<dbReference type="InterPro" id="IPR010137">
    <property type="entry name" value="Lipid_A_LpxA"/>
</dbReference>
<dbReference type="InterPro" id="IPR011004">
    <property type="entry name" value="Trimer_LpxA-like_sf"/>
</dbReference>
<dbReference type="NCBIfam" id="TIGR01852">
    <property type="entry name" value="lipid_A_lpxA"/>
    <property type="match status" value="1"/>
</dbReference>
<dbReference type="NCBIfam" id="NF003657">
    <property type="entry name" value="PRK05289.1"/>
    <property type="match status" value="1"/>
</dbReference>
<dbReference type="PANTHER" id="PTHR43480">
    <property type="entry name" value="ACYL-[ACYL-CARRIER-PROTEIN]--UDP-N-ACETYLGLUCOSAMINE O-ACYLTRANSFERASE"/>
    <property type="match status" value="1"/>
</dbReference>
<dbReference type="PANTHER" id="PTHR43480:SF1">
    <property type="entry name" value="ACYL-[ACYL-CARRIER-PROTEIN]--UDP-N-ACETYLGLUCOSAMINE O-ACYLTRANSFERASE, MITOCHONDRIAL-RELATED"/>
    <property type="match status" value="1"/>
</dbReference>
<dbReference type="Pfam" id="PF13720">
    <property type="entry name" value="Acetyltransf_11"/>
    <property type="match status" value="1"/>
</dbReference>
<dbReference type="Pfam" id="PF00132">
    <property type="entry name" value="Hexapep"/>
    <property type="match status" value="2"/>
</dbReference>
<dbReference type="PIRSF" id="PIRSF000456">
    <property type="entry name" value="UDP-GlcNAc_acltr"/>
    <property type="match status" value="1"/>
</dbReference>
<dbReference type="SUPFAM" id="SSF51161">
    <property type="entry name" value="Trimeric LpxA-like enzymes"/>
    <property type="match status" value="1"/>
</dbReference>
<dbReference type="PROSITE" id="PS00101">
    <property type="entry name" value="HEXAPEP_TRANSFERASES"/>
    <property type="match status" value="3"/>
</dbReference>